<dbReference type="EC" id="1.14.19.3" evidence="7 11"/>
<dbReference type="EMBL" id="AB021980">
    <property type="protein sequence ID" value="BAA75496.1"/>
    <property type="molecule type" value="mRNA"/>
</dbReference>
<dbReference type="EMBL" id="HQ909027">
    <property type="protein sequence ID" value="AEX15918.1"/>
    <property type="molecule type" value="mRNA"/>
</dbReference>
<dbReference type="EMBL" id="BC081776">
    <property type="protein sequence ID" value="AAH81776.1"/>
    <property type="molecule type" value="mRNA"/>
</dbReference>
<dbReference type="PIR" id="JG0180">
    <property type="entry name" value="JG0180"/>
</dbReference>
<dbReference type="RefSeq" id="NP_112634.1">
    <property type="nucleotide sequence ID" value="NM_031344.2"/>
</dbReference>
<dbReference type="SMR" id="Q9Z122"/>
<dbReference type="FunCoup" id="Q9Z122">
    <property type="interactions" value="599"/>
</dbReference>
<dbReference type="STRING" id="10116.ENSRNOP00000027756"/>
<dbReference type="BindingDB" id="Q9Z122"/>
<dbReference type="ChEMBL" id="CHEMBL5088"/>
<dbReference type="SwissLipids" id="SLP:000001190"/>
<dbReference type="PhosphoSitePlus" id="Q9Z122"/>
<dbReference type="jPOST" id="Q9Z122"/>
<dbReference type="PaxDb" id="10116-ENSRNOP00000027756"/>
<dbReference type="Ensembl" id="ENSRNOT00000027756.7">
    <property type="protein sequence ID" value="ENSRNOP00000027756.6"/>
    <property type="gene ID" value="ENSRNOG00000020440.7"/>
</dbReference>
<dbReference type="GeneID" id="83512"/>
<dbReference type="KEGG" id="rno:83512"/>
<dbReference type="AGR" id="RGD:68339"/>
<dbReference type="CTD" id="9415"/>
<dbReference type="RGD" id="68339">
    <property type="gene designation" value="Fads2"/>
</dbReference>
<dbReference type="eggNOG" id="KOG4232">
    <property type="taxonomic scope" value="Eukaryota"/>
</dbReference>
<dbReference type="GeneTree" id="ENSGT00950000182990"/>
<dbReference type="HOGENOM" id="CLU_016265_0_1_1"/>
<dbReference type="InParanoid" id="Q9Z122"/>
<dbReference type="OMA" id="QWWKNKH"/>
<dbReference type="OrthoDB" id="260091at2759"/>
<dbReference type="PhylomeDB" id="Q9Z122"/>
<dbReference type="BRENDA" id="1.14.19.3">
    <property type="organism ID" value="5301"/>
</dbReference>
<dbReference type="Reactome" id="R-RNO-2046105">
    <property type="pathway name" value="Linoleic acid (LA) metabolism"/>
</dbReference>
<dbReference type="Reactome" id="R-RNO-2046106">
    <property type="pathway name" value="alpha-linolenic acid (ALA) metabolism"/>
</dbReference>
<dbReference type="UniPathway" id="UPA00658"/>
<dbReference type="PRO" id="PR:Q9Z122"/>
<dbReference type="Proteomes" id="UP000002494">
    <property type="component" value="Chromosome 1"/>
</dbReference>
<dbReference type="GO" id="GO:0005789">
    <property type="term" value="C:endoplasmic reticulum membrane"/>
    <property type="evidence" value="ECO:0000304"/>
    <property type="project" value="Reactome"/>
</dbReference>
<dbReference type="GO" id="GO:0016213">
    <property type="term" value="F:acyl-CoA 6-desaturase activity"/>
    <property type="evidence" value="ECO:0007669"/>
    <property type="project" value="UniProtKB-EC"/>
</dbReference>
<dbReference type="GO" id="GO:0045485">
    <property type="term" value="F:omega-6 fatty acid desaturase activity"/>
    <property type="evidence" value="ECO:0000304"/>
    <property type="project" value="Reactome"/>
</dbReference>
<dbReference type="GO" id="GO:0016717">
    <property type="term" value="F:oxidoreductase activity, acting on paired donors, with oxidation of a pair of donors resulting in the reduction of molecular oxygen to two molecules of water"/>
    <property type="evidence" value="ECO:0000318"/>
    <property type="project" value="GO_Central"/>
</dbReference>
<dbReference type="GO" id="GO:0004768">
    <property type="term" value="F:stearoyl-CoA 9-desaturase activity"/>
    <property type="evidence" value="ECO:0000266"/>
    <property type="project" value="RGD"/>
</dbReference>
<dbReference type="GO" id="GO:0036109">
    <property type="term" value="P:alpha-linolenic acid metabolic process"/>
    <property type="evidence" value="ECO:0007669"/>
    <property type="project" value="Ensembl"/>
</dbReference>
<dbReference type="GO" id="GO:0002538">
    <property type="term" value="P:arachidonate metabolite production involved in inflammatory response"/>
    <property type="evidence" value="ECO:0000315"/>
    <property type="project" value="RGD"/>
</dbReference>
<dbReference type="GO" id="GO:1901570">
    <property type="term" value="P:fatty acid derivative biosynthetic process"/>
    <property type="evidence" value="ECO:0007669"/>
    <property type="project" value="Ensembl"/>
</dbReference>
<dbReference type="GO" id="GO:0043651">
    <property type="term" value="P:linoleic acid metabolic process"/>
    <property type="evidence" value="ECO:0007669"/>
    <property type="project" value="Ensembl"/>
</dbReference>
<dbReference type="GO" id="GO:0006629">
    <property type="term" value="P:lipid metabolic process"/>
    <property type="evidence" value="ECO:0000318"/>
    <property type="project" value="GO_Central"/>
</dbReference>
<dbReference type="GO" id="GO:0042759">
    <property type="term" value="P:long-chain fatty acid biosynthetic process"/>
    <property type="evidence" value="ECO:0007669"/>
    <property type="project" value="Ensembl"/>
</dbReference>
<dbReference type="GO" id="GO:1900409">
    <property type="term" value="P:positive regulation of cellular response to oxidative stress"/>
    <property type="evidence" value="ECO:0000315"/>
    <property type="project" value="RGD"/>
</dbReference>
<dbReference type="GO" id="GO:0006636">
    <property type="term" value="P:unsaturated fatty acid biosynthetic process"/>
    <property type="evidence" value="ECO:0007669"/>
    <property type="project" value="UniProtKB-UniPathway"/>
</dbReference>
<dbReference type="GO" id="GO:0042761">
    <property type="term" value="P:very long-chain fatty acid biosynthetic process"/>
    <property type="evidence" value="ECO:0000304"/>
    <property type="project" value="RGD"/>
</dbReference>
<dbReference type="CDD" id="cd03506">
    <property type="entry name" value="Delta6-FADS-like"/>
    <property type="match status" value="1"/>
</dbReference>
<dbReference type="FunFam" id="3.10.120.10:FF:000010">
    <property type="entry name" value="Delta-6 fatty acyl desaturase"/>
    <property type="match status" value="1"/>
</dbReference>
<dbReference type="Gene3D" id="3.10.120.10">
    <property type="entry name" value="Cytochrome b5-like heme/steroid binding domain"/>
    <property type="match status" value="1"/>
</dbReference>
<dbReference type="InterPro" id="IPR001199">
    <property type="entry name" value="Cyt_B5-like_heme/steroid-bd"/>
</dbReference>
<dbReference type="InterPro" id="IPR036400">
    <property type="entry name" value="Cyt_B5-like_heme/steroid_sf"/>
</dbReference>
<dbReference type="InterPro" id="IPR005804">
    <property type="entry name" value="FA_desaturase_dom"/>
</dbReference>
<dbReference type="InterPro" id="IPR012171">
    <property type="entry name" value="Fatty_acid_desaturase"/>
</dbReference>
<dbReference type="PANTHER" id="PTHR19353:SF12">
    <property type="entry name" value="ACYL-COA 6-DESATURASE"/>
    <property type="match status" value="1"/>
</dbReference>
<dbReference type="PANTHER" id="PTHR19353">
    <property type="entry name" value="FATTY ACID DESATURASE 2"/>
    <property type="match status" value="1"/>
</dbReference>
<dbReference type="Pfam" id="PF00173">
    <property type="entry name" value="Cyt-b5"/>
    <property type="match status" value="1"/>
</dbReference>
<dbReference type="Pfam" id="PF00487">
    <property type="entry name" value="FA_desaturase"/>
    <property type="match status" value="1"/>
</dbReference>
<dbReference type="PIRSF" id="PIRSF015921">
    <property type="entry name" value="FA_sphinglp_des"/>
    <property type="match status" value="1"/>
</dbReference>
<dbReference type="SMART" id="SM01117">
    <property type="entry name" value="Cyt-b5"/>
    <property type="match status" value="1"/>
</dbReference>
<dbReference type="SUPFAM" id="SSF55856">
    <property type="entry name" value="Cytochrome b5-like heme/steroid binding domain"/>
    <property type="match status" value="1"/>
</dbReference>
<dbReference type="PROSITE" id="PS50255">
    <property type="entry name" value="CYTOCHROME_B5_2"/>
    <property type="match status" value="1"/>
</dbReference>
<keyword id="KW-0249">Electron transport</keyword>
<keyword id="KW-0256">Endoplasmic reticulum</keyword>
<keyword id="KW-0275">Fatty acid biosynthesis</keyword>
<keyword id="KW-0276">Fatty acid metabolism</keyword>
<keyword id="KW-0444">Lipid biosynthesis</keyword>
<keyword id="KW-0443">Lipid metabolism</keyword>
<keyword id="KW-0472">Membrane</keyword>
<keyword id="KW-0492">Microsome</keyword>
<keyword id="KW-0560">Oxidoreductase</keyword>
<keyword id="KW-1185">Reference proteome</keyword>
<keyword id="KW-0812">Transmembrane</keyword>
<keyword id="KW-1133">Transmembrane helix</keyword>
<keyword id="KW-0813">Transport</keyword>
<organism>
    <name type="scientific">Rattus norvegicus</name>
    <name type="common">Rat</name>
    <dbReference type="NCBI Taxonomy" id="10116"/>
    <lineage>
        <taxon>Eukaryota</taxon>
        <taxon>Metazoa</taxon>
        <taxon>Chordata</taxon>
        <taxon>Craniata</taxon>
        <taxon>Vertebrata</taxon>
        <taxon>Euteleostomi</taxon>
        <taxon>Mammalia</taxon>
        <taxon>Eutheria</taxon>
        <taxon>Euarchontoglires</taxon>
        <taxon>Glires</taxon>
        <taxon>Rodentia</taxon>
        <taxon>Myomorpha</taxon>
        <taxon>Muroidea</taxon>
        <taxon>Muridae</taxon>
        <taxon>Murinae</taxon>
        <taxon>Rattus</taxon>
    </lineage>
</organism>
<gene>
    <name type="primary">Fads2</name>
    <name type="synonym">Fadsd6</name>
</gene>
<accession>Q9Z122</accession>
<accession>H2BF31</accession>
<comment type="function">
    <text evidence="1 6 7 9 10 11">Involved in the biosynthesis of highly unsaturated fatty acids (HUFA) from the essential polyunsaturated fatty acids (PUFA) linoleic acid (LA) (18:2n-6) and alpha-linolenic acid (ALA) (18:3n-3) precursors, acting as a fatty acyl-coenzyme A (CoA) desaturase that introduces a cis double bond at carbon 6 of the fatty acyl chain. Catalyzes the first and rate limiting step in this pathway which is the desaturation of LA (18:2n-6) and ALA (18:3n-3) into gamma-linoleate (GLA) (18:3n-6) and stearidonate (18:4n-3), respectively (PubMed:10049752, PubMed:11988075, PubMed:14563830, PubMed:22216341, PubMed:24070791). Subsequently, in the biosynthetic pathway of HUFA n-3 series, it desaturates tetracosapentaenoate (24:5n-3) to tetracosahexaenoate (24:6n-3), which is then converted to docosahexaenoate (DHA)(22:6n-3), an important lipid for nervous system function (PubMed:11988075). It can also desaturate (11E)-octadecenoate (trans-vaccenoate) at carbon 6 generating (6Z,11E)-octadecadienoate (PubMed:24070791). In addition to Delta-6 activity, this enzyme exhibits Delta-8 activity with slight biases toward n-3 fatty acyl-CoA substrates (By similarity).</text>
</comment>
<comment type="catalytic activity">
    <reaction evidence="2">
        <text>(9Z,12Z)-octadecadienoyl-CoA + 2 Fe(II)-[cytochrome b5] + O2 + 2 H(+) = (6Z,9Z,12Z)-octadecatrienoyl-CoA + 2 Fe(III)-[cytochrome b5] + 2 H2O</text>
        <dbReference type="Rhea" id="RHEA:47140"/>
        <dbReference type="Rhea" id="RHEA-COMP:10438"/>
        <dbReference type="Rhea" id="RHEA-COMP:10439"/>
        <dbReference type="ChEBI" id="CHEBI:15377"/>
        <dbReference type="ChEBI" id="CHEBI:15378"/>
        <dbReference type="ChEBI" id="CHEBI:15379"/>
        <dbReference type="ChEBI" id="CHEBI:29033"/>
        <dbReference type="ChEBI" id="CHEBI:29034"/>
        <dbReference type="ChEBI" id="CHEBI:57363"/>
        <dbReference type="ChEBI" id="CHEBI:57383"/>
        <dbReference type="EC" id="1.14.19.3"/>
    </reaction>
    <physiologicalReaction direction="left-to-right" evidence="2">
        <dbReference type="Rhea" id="RHEA:47141"/>
    </physiologicalReaction>
</comment>
<comment type="catalytic activity">
    <reaction evidence="7 11">
        <text>(9Z,12Z,15Z)-octadecatrienoyl-CoA + 2 Fe(II)-[cytochrome b5] + O2 + 2 H(+) = (6Z,9Z,12Z,15Z)-octadecatetraenoyl-CoA + 2 Fe(III)-[cytochrome b5] + 2 H2O</text>
        <dbReference type="Rhea" id="RHEA:47144"/>
        <dbReference type="Rhea" id="RHEA-COMP:10438"/>
        <dbReference type="Rhea" id="RHEA-COMP:10439"/>
        <dbReference type="ChEBI" id="CHEBI:15377"/>
        <dbReference type="ChEBI" id="CHEBI:15378"/>
        <dbReference type="ChEBI" id="CHEBI:15379"/>
        <dbReference type="ChEBI" id="CHEBI:29033"/>
        <dbReference type="ChEBI" id="CHEBI:29034"/>
        <dbReference type="ChEBI" id="CHEBI:71489"/>
        <dbReference type="ChEBI" id="CHEBI:74034"/>
        <dbReference type="EC" id="1.14.19.3"/>
    </reaction>
    <physiologicalReaction direction="left-to-right" evidence="7 11">
        <dbReference type="Rhea" id="RHEA:47145"/>
    </physiologicalReaction>
</comment>
<comment type="catalytic activity">
    <reaction evidence="7">
        <text>(9Z,12Z,15Z,18Z,21Z)-tetracosapentaenoyl-CoA + 2 Fe(II)-[cytochrome b5] + O2 + 2 H(+) = (6Z,9Z,12Z,15Z,18Z,21Z)-tetracosahexaenoyl-CoA + 2 Fe(III)-[cytochrome b5] + 2 H2O</text>
        <dbReference type="Rhea" id="RHEA:36999"/>
        <dbReference type="Rhea" id="RHEA-COMP:10438"/>
        <dbReference type="Rhea" id="RHEA-COMP:10439"/>
        <dbReference type="ChEBI" id="CHEBI:15377"/>
        <dbReference type="ChEBI" id="CHEBI:15378"/>
        <dbReference type="ChEBI" id="CHEBI:15379"/>
        <dbReference type="ChEBI" id="CHEBI:29033"/>
        <dbReference type="ChEBI" id="CHEBI:29034"/>
        <dbReference type="ChEBI" id="CHEBI:74083"/>
        <dbReference type="ChEBI" id="CHEBI:74086"/>
    </reaction>
    <physiologicalReaction direction="left-to-right" evidence="7">
        <dbReference type="Rhea" id="RHEA:37000"/>
    </physiologicalReaction>
</comment>
<comment type="catalytic activity">
    <reaction evidence="11">
        <text>(11E)-octadecenoyl-CoA + 2 Fe(II)-[cytochrome b5] + O2 + 2 H(+) = (6Z,11E)-octadecadienoyl-CoA + 2 Fe(III)-[cytochrome b5] + 2 H2O</text>
        <dbReference type="Rhea" id="RHEA:46064"/>
        <dbReference type="Rhea" id="RHEA-COMP:10438"/>
        <dbReference type="Rhea" id="RHEA-COMP:10439"/>
        <dbReference type="ChEBI" id="CHEBI:15377"/>
        <dbReference type="ChEBI" id="CHEBI:15378"/>
        <dbReference type="ChEBI" id="CHEBI:15379"/>
        <dbReference type="ChEBI" id="CHEBI:29033"/>
        <dbReference type="ChEBI" id="CHEBI:29034"/>
        <dbReference type="ChEBI" id="CHEBI:74296"/>
        <dbReference type="ChEBI" id="CHEBI:85652"/>
    </reaction>
    <physiologicalReaction direction="left-to-right" evidence="11">
        <dbReference type="Rhea" id="RHEA:46065"/>
    </physiologicalReaction>
</comment>
<comment type="catalytic activity">
    <reaction evidence="1">
        <text>(11Z,14Z)-eicosadienoyl-CoA + 2 Fe(II)-[cytochrome b5] + O2 + 2 H(+) = (8Z,11Z,14Z)-eicosatrienoyl-CoA + 2 Fe(III)-[cytochrome b5] + 2 H2O</text>
        <dbReference type="Rhea" id="RHEA:39567"/>
        <dbReference type="Rhea" id="RHEA-COMP:10438"/>
        <dbReference type="Rhea" id="RHEA-COMP:10439"/>
        <dbReference type="ChEBI" id="CHEBI:15377"/>
        <dbReference type="ChEBI" id="CHEBI:15378"/>
        <dbReference type="ChEBI" id="CHEBI:15379"/>
        <dbReference type="ChEBI" id="CHEBI:29033"/>
        <dbReference type="ChEBI" id="CHEBI:29034"/>
        <dbReference type="ChEBI" id="CHEBI:74264"/>
        <dbReference type="ChEBI" id="CHEBI:76410"/>
    </reaction>
    <physiologicalReaction direction="left-to-right" evidence="1">
        <dbReference type="Rhea" id="RHEA:39568"/>
    </physiologicalReaction>
</comment>
<comment type="catalytic activity">
    <reaction evidence="1">
        <text>(11Z,14Z,17Z)-eicosatrienoyl-CoA + 2 Fe(II)-[cytochrome b5] + O2 + 2 H(+) = (8Z,11Z,14Z,17Z)-eicosatetraenoyl-CoA + 2 Fe(III)-[cytochrome b5] + 2 H2O</text>
        <dbReference type="Rhea" id="RHEA:39571"/>
        <dbReference type="Rhea" id="RHEA-COMP:10438"/>
        <dbReference type="Rhea" id="RHEA-COMP:10439"/>
        <dbReference type="ChEBI" id="CHEBI:15377"/>
        <dbReference type="ChEBI" id="CHEBI:15378"/>
        <dbReference type="ChEBI" id="CHEBI:15379"/>
        <dbReference type="ChEBI" id="CHEBI:29033"/>
        <dbReference type="ChEBI" id="CHEBI:29034"/>
        <dbReference type="ChEBI" id="CHEBI:74265"/>
        <dbReference type="ChEBI" id="CHEBI:74328"/>
    </reaction>
    <physiologicalReaction direction="left-to-right" evidence="1">
        <dbReference type="Rhea" id="RHEA:39572"/>
    </physiologicalReaction>
</comment>
<comment type="pathway">
    <text evidence="16 17">Lipid metabolism; polyunsaturated fatty acid biosynthesis.</text>
</comment>
<comment type="subcellular location">
    <subcellularLocation>
        <location evidence="15">Endoplasmic reticulum membrane</location>
        <topology evidence="4">Multi-pass membrane protein</topology>
    </subcellularLocation>
    <subcellularLocation>
        <location evidence="7">Microsome membrane</location>
        <topology evidence="4">Multi-pass membrane protein</topology>
    </subcellularLocation>
</comment>
<comment type="tissue specificity">
    <text evidence="7 12">Expressed in the liver and brain (at protein level) (PubMed:11988075). Highest activity is found in the liver and adrenals followed by the testes and other organs, absent in adipose tissue (PubMed:5094766).</text>
</comment>
<comment type="induction">
    <text evidence="8">Inhibited by a shortage of insulin and an increase of glucagon.</text>
</comment>
<comment type="domain">
    <text evidence="2">The protein sequence includes a number of characteristic features of microsomal fatty acid desaturases including the three histidine boxes HXXXH, HXXHH, and QXXHH (these domains may contain the active site and/or be involved in metal ion binding), and the N-terminal cytochrome b5 domain containing the heme-binding motif, HPGG, similar to that of other fatty acid desaturases.</text>
</comment>
<comment type="similarity">
    <text evidence="15">Belongs to the fatty acid desaturase type 1 family.</text>
</comment>
<name>FADS2_RAT</name>
<feature type="chain" id="PRO_0000307105" description="Acyl-CoA 6-desaturase">
    <location>
        <begin position="1"/>
        <end position="444"/>
    </location>
</feature>
<feature type="topological domain" description="Cytoplasmic" evidence="15">
    <location>
        <begin position="1"/>
        <end position="130"/>
    </location>
</feature>
<feature type="transmembrane region" description="Helical" evidence="4">
    <location>
        <begin position="131"/>
        <end position="151"/>
    </location>
</feature>
<feature type="topological domain" description="Lumenal" evidence="15">
    <location>
        <begin position="152"/>
        <end position="157"/>
    </location>
</feature>
<feature type="transmembrane region" description="Helical" evidence="4">
    <location>
        <begin position="158"/>
        <end position="178"/>
    </location>
</feature>
<feature type="topological domain" description="Cytoplasmic" evidence="15">
    <location>
        <begin position="179"/>
        <end position="264"/>
    </location>
</feature>
<feature type="transmembrane region" description="Helical" evidence="4">
    <location>
        <begin position="265"/>
        <end position="285"/>
    </location>
</feature>
<feature type="topological domain" description="Lumenal" evidence="15">
    <location>
        <begin position="286"/>
        <end position="305"/>
    </location>
</feature>
<feature type="transmembrane region" description="Helical" evidence="4">
    <location>
        <begin position="306"/>
        <end position="326"/>
    </location>
</feature>
<feature type="topological domain" description="Cytoplasmic" evidence="15">
    <location>
        <begin position="327"/>
        <end position="444"/>
    </location>
</feature>
<feature type="domain" description="Cytochrome b5 heme-binding" evidence="5">
    <location>
        <begin position="18"/>
        <end position="95"/>
    </location>
</feature>
<feature type="short sequence motif" description="Histidine box-1">
    <location>
        <begin position="180"/>
        <end position="184"/>
    </location>
</feature>
<feature type="short sequence motif" description="Histidine box-2">
    <location>
        <begin position="217"/>
        <end position="221"/>
    </location>
</feature>
<feature type="short sequence motif" description="Histidine box-3">
    <location>
        <begin position="382"/>
        <end position="386"/>
    </location>
</feature>
<feature type="sequence conflict" description="In Ref. 2; AEX15918." evidence="15" ref="2">
    <original>L</original>
    <variation>M</variation>
    <location>
        <position position="101"/>
    </location>
</feature>
<reference key="1">
    <citation type="journal article" date="1999" name="Biochem. Biophys. Res. Commun.">
        <title>Molecular cloning and functional characterization of rat Delta-6 fatty acid desaturase.</title>
        <authorList>
            <person name="Aki T."/>
            <person name="Shimada Y."/>
            <person name="Inagaki K."/>
            <person name="Higashimoto H."/>
            <person name="Kawamoto S."/>
            <person name="Shigeta S."/>
            <person name="Ono K."/>
            <person name="Suzuki O."/>
        </authorList>
    </citation>
    <scope>NUCLEOTIDE SEQUENCE [MRNA]</scope>
    <scope>FUNCTION</scope>
    <source>
        <strain>Sprague-Dawley</strain>
        <tissue>Liver</tissue>
    </source>
</reference>
<reference key="2">
    <citation type="journal article" date="2011" name="PLoS ONE">
        <title>Elongase reactions as control points in long-chain polyunsaturated fatty acid synthesis.</title>
        <authorList>
            <person name="Gregory M.K."/>
            <person name="Gibson R.A."/>
            <person name="Cook-Johnson R.J."/>
            <person name="Cleland L.G."/>
            <person name="James M.J."/>
        </authorList>
    </citation>
    <scope>NUCLEOTIDE SEQUENCE [MRNA]</scope>
    <scope>FUNCTION</scope>
    <source>
        <strain>Dark agouti</strain>
    </source>
</reference>
<reference key="3">
    <citation type="journal article" date="2004" name="Genome Res.">
        <title>The status, quality, and expansion of the NIH full-length cDNA project: the Mammalian Gene Collection (MGC).</title>
        <authorList>
            <consortium name="The MGC Project Team"/>
        </authorList>
    </citation>
    <scope>NUCLEOTIDE SEQUENCE [LARGE SCALE MRNA]</scope>
    <source>
        <tissue>Kidney</tissue>
    </source>
</reference>
<reference key="4">
    <citation type="journal article" date="1971" name="Lipids">
        <title>The desaturation step in the animal biosynthesis of polyunsaturated fatty acids.</title>
        <authorList>
            <person name="Brenner R.R."/>
        </authorList>
    </citation>
    <scope>TISSUE SPECIFICITY</scope>
</reference>
<reference key="5">
    <citation type="journal article" date="2003" name="Prostaglandins Leukot. Essent. Fatty Acids">
        <title>Hormonal modulation of delta-6 and delta-5 desaturases: case of diabetes.</title>
        <authorList>
            <person name="Brenner R.R."/>
        </authorList>
    </citation>
    <scope>INDUCTION</scope>
</reference>
<reference key="6">
    <citation type="journal article" date="2002" name="Biochem. J.">
        <title>The same rat Delta6-desaturase not only acts on 18- but also on 24-carbon fatty acids in very-long-chain polyunsaturated fatty acid biosynthesis.</title>
        <authorList>
            <person name="D'andrea S."/>
            <person name="Guillou H."/>
            <person name="Jan S."/>
            <person name="Catheline D."/>
            <person name="Thibault J.N."/>
            <person name="Bouriel M."/>
            <person name="Rioux V."/>
            <person name="Legrand P."/>
        </authorList>
    </citation>
    <scope>FUNCTION</scope>
    <scope>CATALYTIC ACTIVITY</scope>
    <scope>PATHWAY</scope>
    <scope>SUBCELLULAR LOCATION</scope>
    <scope>TISSUE SPECIFICITY</scope>
</reference>
<reference key="7">
    <citation type="journal article" date="2004" name="J. Lipid Res.">
        <title>Distinct roles of endoplasmic reticulum cytochrome b5 and fused cytochrome b5-like domain for rat delta-6-desaturase activity.</title>
        <authorList>
            <person name="Guillou H."/>
            <person name="D'Andrea S."/>
            <person name="Rioux V."/>
            <person name="Barnouin R."/>
            <person name="Dalaine S."/>
            <person name="Pedrono F."/>
            <person name="Jan S."/>
            <person name="Legrand P."/>
        </authorList>
    </citation>
    <scope>FUNCTION</scope>
</reference>
<reference key="8">
    <citation type="journal article" date="2013" name="J. Lipid Res.">
        <title>Trans-vaccenate is Delta13-desaturated by FADS3 in rodents.</title>
        <authorList>
            <person name="Rioux V."/>
            <person name="Pedrono F."/>
            <person name="Blanchard H."/>
            <person name="Duby C."/>
            <person name="Boulier-Monthean N."/>
            <person name="Bernard L."/>
            <person name="Beauchamp E."/>
            <person name="Catheline D."/>
            <person name="Legrand P."/>
        </authorList>
    </citation>
    <scope>FUNCTION</scope>
    <scope>CATALYTIC ACTIVITY</scope>
    <scope>PATHWAY</scope>
</reference>
<evidence type="ECO:0000250" key="1">
    <source>
        <dbReference type="UniProtKB" id="B8R1K0"/>
    </source>
</evidence>
<evidence type="ECO:0000250" key="2">
    <source>
        <dbReference type="UniProtKB" id="O95864"/>
    </source>
</evidence>
<evidence type="ECO:0000250" key="3">
    <source>
        <dbReference type="UniProtKB" id="Q9Z0R9"/>
    </source>
</evidence>
<evidence type="ECO:0000255" key="4"/>
<evidence type="ECO:0000255" key="5">
    <source>
        <dbReference type="PROSITE-ProRule" id="PRU00279"/>
    </source>
</evidence>
<evidence type="ECO:0000269" key="6">
    <source>
    </source>
</evidence>
<evidence type="ECO:0000269" key="7">
    <source>
    </source>
</evidence>
<evidence type="ECO:0000269" key="8">
    <source>
    </source>
</evidence>
<evidence type="ECO:0000269" key="9">
    <source>
    </source>
</evidence>
<evidence type="ECO:0000269" key="10">
    <source>
    </source>
</evidence>
<evidence type="ECO:0000269" key="11">
    <source>
    </source>
</evidence>
<evidence type="ECO:0000269" key="12">
    <source>
    </source>
</evidence>
<evidence type="ECO:0000303" key="13">
    <source>
    </source>
</evidence>
<evidence type="ECO:0000303" key="14">
    <source>
    </source>
</evidence>
<evidence type="ECO:0000305" key="15"/>
<evidence type="ECO:0000305" key="16">
    <source>
    </source>
</evidence>
<evidence type="ECO:0000305" key="17">
    <source>
    </source>
</evidence>
<proteinExistence type="evidence at protein level"/>
<protein>
    <recommendedName>
        <fullName evidence="15">Acyl-CoA 6-desaturase</fullName>
        <ecNumber evidence="7 11">1.14.19.3</ecNumber>
    </recommendedName>
    <alternativeName>
        <fullName>Delta(6) fatty acid desaturase</fullName>
        <shortName evidence="3">D6D</shortName>
        <shortName>Delta(6) desaturase</shortName>
        <shortName evidence="13 14">Delta-6 desaturase</shortName>
    </alternativeName>
    <alternativeName>
        <fullName>Fatty acid desaturase 2</fullName>
    </alternativeName>
</protein>
<sequence length="444" mass="52380">MGKGGNQGEGSTELQAPMPTFRWEEIQKHNLRTDRWLVIDRKVYNVTKWSQRHPGGHRVIGHYSGEDATDAFRAFHLDLDFVGKFLKPLLIGELAPEEPSLDRGKSSQITEDFRALKKTAEDMNLFKTNHLFFFLLLSHIIVMESIAWFILSYFGNGWIPTVITAFVLATSQAQAGWLQHDYGHLSVYKKSIWNHIVHKFVIGHLKGASANWWNHRHFQHHAKPNIFHKDPDIKSLHVFVLGEWQPLEYGKKKLKYLPYNHQHEYFFLIGPPLLIPMYFQYQIIMTMIRRRDWVDLAWAISYYARFFYTYIPFYGILGALVFLNFIRFLESHWFVWVTQMNHIVMEIDLDHYRDWFSSQLAATCNVEQSFFNDWFSGHLNFQIEHHLFPTMPRHNLHKIAPLVKSLCAKHGIEYQEKPLLRALLDIVSSLKKSGELWLDAYLHK</sequence>